<dbReference type="EC" id="1.14.12.17" evidence="1"/>
<dbReference type="EMBL" id="AE017355">
    <property type="protein sequence ID" value="AAT63914.1"/>
    <property type="molecule type" value="Genomic_DNA"/>
</dbReference>
<dbReference type="RefSeq" id="YP_035665.1">
    <property type="nucleotide sequence ID" value="NC_005957.1"/>
</dbReference>
<dbReference type="SMR" id="Q6HLA6"/>
<dbReference type="KEGG" id="btk:BT9727_1331"/>
<dbReference type="PATRIC" id="fig|281309.8.peg.1402"/>
<dbReference type="HOGENOM" id="CLU_003827_12_0_9"/>
<dbReference type="Proteomes" id="UP000001301">
    <property type="component" value="Chromosome"/>
</dbReference>
<dbReference type="GO" id="GO:0071949">
    <property type="term" value="F:FAD binding"/>
    <property type="evidence" value="ECO:0007669"/>
    <property type="project" value="InterPro"/>
</dbReference>
<dbReference type="GO" id="GO:0020037">
    <property type="term" value="F:heme binding"/>
    <property type="evidence" value="ECO:0007669"/>
    <property type="project" value="InterPro"/>
</dbReference>
<dbReference type="GO" id="GO:0046872">
    <property type="term" value="F:metal ion binding"/>
    <property type="evidence" value="ECO:0007669"/>
    <property type="project" value="UniProtKB-KW"/>
</dbReference>
<dbReference type="GO" id="GO:0008941">
    <property type="term" value="F:nitric oxide dioxygenase NAD(P)H activity"/>
    <property type="evidence" value="ECO:0007669"/>
    <property type="project" value="UniProtKB-UniRule"/>
</dbReference>
<dbReference type="GO" id="GO:0019825">
    <property type="term" value="F:oxygen binding"/>
    <property type="evidence" value="ECO:0007669"/>
    <property type="project" value="InterPro"/>
</dbReference>
<dbReference type="GO" id="GO:0005344">
    <property type="term" value="F:oxygen carrier activity"/>
    <property type="evidence" value="ECO:0007669"/>
    <property type="project" value="UniProtKB-UniRule"/>
</dbReference>
<dbReference type="GO" id="GO:0071500">
    <property type="term" value="P:cellular response to nitrosative stress"/>
    <property type="evidence" value="ECO:0007669"/>
    <property type="project" value="TreeGrafter"/>
</dbReference>
<dbReference type="GO" id="GO:0046210">
    <property type="term" value="P:nitric oxide catabolic process"/>
    <property type="evidence" value="ECO:0007669"/>
    <property type="project" value="TreeGrafter"/>
</dbReference>
<dbReference type="GO" id="GO:0009636">
    <property type="term" value="P:response to toxic substance"/>
    <property type="evidence" value="ECO:0007669"/>
    <property type="project" value="UniProtKB-KW"/>
</dbReference>
<dbReference type="CDD" id="cd06184">
    <property type="entry name" value="flavohem_like_fad_nad_binding"/>
    <property type="match status" value="1"/>
</dbReference>
<dbReference type="CDD" id="cd14777">
    <property type="entry name" value="Yhb1-globin-like"/>
    <property type="match status" value="1"/>
</dbReference>
<dbReference type="FunFam" id="1.10.490.10:FF:000003">
    <property type="entry name" value="Flavohemoprotein"/>
    <property type="match status" value="1"/>
</dbReference>
<dbReference type="FunFam" id="2.40.30.10:FF:000034">
    <property type="entry name" value="Flavohemoprotein"/>
    <property type="match status" value="1"/>
</dbReference>
<dbReference type="FunFam" id="3.40.50.80:FF:000010">
    <property type="entry name" value="Flavohemoprotein"/>
    <property type="match status" value="1"/>
</dbReference>
<dbReference type="Gene3D" id="1.10.490.10">
    <property type="entry name" value="Globins"/>
    <property type="match status" value="1"/>
</dbReference>
<dbReference type="Gene3D" id="3.40.50.80">
    <property type="entry name" value="Nucleotide-binding domain of ferredoxin-NADP reductase (FNR) module"/>
    <property type="match status" value="1"/>
</dbReference>
<dbReference type="Gene3D" id="2.40.30.10">
    <property type="entry name" value="Translation factors"/>
    <property type="match status" value="1"/>
</dbReference>
<dbReference type="HAMAP" id="MF_01252">
    <property type="entry name" value="Hmp"/>
    <property type="match status" value="1"/>
</dbReference>
<dbReference type="InterPro" id="IPR008333">
    <property type="entry name" value="Cbr1-like_FAD-bd_dom"/>
</dbReference>
<dbReference type="InterPro" id="IPR017927">
    <property type="entry name" value="FAD-bd_FR_type"/>
</dbReference>
<dbReference type="InterPro" id="IPR001709">
    <property type="entry name" value="Flavoprot_Pyr_Nucl_cyt_Rdtase"/>
</dbReference>
<dbReference type="InterPro" id="IPR039261">
    <property type="entry name" value="FNR_nucleotide-bd"/>
</dbReference>
<dbReference type="InterPro" id="IPR000971">
    <property type="entry name" value="Globin"/>
</dbReference>
<dbReference type="InterPro" id="IPR009050">
    <property type="entry name" value="Globin-like_sf"/>
</dbReference>
<dbReference type="InterPro" id="IPR012292">
    <property type="entry name" value="Globin/Proto"/>
</dbReference>
<dbReference type="InterPro" id="IPR023950">
    <property type="entry name" value="Hmp"/>
</dbReference>
<dbReference type="InterPro" id="IPR001433">
    <property type="entry name" value="OxRdtase_FAD/NAD-bd"/>
</dbReference>
<dbReference type="InterPro" id="IPR017938">
    <property type="entry name" value="Riboflavin_synthase-like_b-brl"/>
</dbReference>
<dbReference type="NCBIfam" id="NF009805">
    <property type="entry name" value="PRK13289.1"/>
    <property type="match status" value="1"/>
</dbReference>
<dbReference type="PANTHER" id="PTHR43396">
    <property type="entry name" value="FLAVOHEMOPROTEIN"/>
    <property type="match status" value="1"/>
</dbReference>
<dbReference type="PANTHER" id="PTHR43396:SF3">
    <property type="entry name" value="FLAVOHEMOPROTEIN"/>
    <property type="match status" value="1"/>
</dbReference>
<dbReference type="Pfam" id="PF00970">
    <property type="entry name" value="FAD_binding_6"/>
    <property type="match status" value="1"/>
</dbReference>
<dbReference type="Pfam" id="PF00042">
    <property type="entry name" value="Globin"/>
    <property type="match status" value="1"/>
</dbReference>
<dbReference type="Pfam" id="PF00175">
    <property type="entry name" value="NAD_binding_1"/>
    <property type="match status" value="1"/>
</dbReference>
<dbReference type="PRINTS" id="PR00371">
    <property type="entry name" value="FPNCR"/>
</dbReference>
<dbReference type="PRINTS" id="PR00410">
    <property type="entry name" value="PHEHYDRXLASE"/>
</dbReference>
<dbReference type="SUPFAM" id="SSF52343">
    <property type="entry name" value="Ferredoxin reductase-like, C-terminal NADP-linked domain"/>
    <property type="match status" value="1"/>
</dbReference>
<dbReference type="SUPFAM" id="SSF46458">
    <property type="entry name" value="Globin-like"/>
    <property type="match status" value="1"/>
</dbReference>
<dbReference type="SUPFAM" id="SSF63380">
    <property type="entry name" value="Riboflavin synthase domain-like"/>
    <property type="match status" value="1"/>
</dbReference>
<dbReference type="PROSITE" id="PS51384">
    <property type="entry name" value="FAD_FR"/>
    <property type="match status" value="1"/>
</dbReference>
<dbReference type="PROSITE" id="PS01033">
    <property type="entry name" value="GLOBIN"/>
    <property type="match status" value="1"/>
</dbReference>
<keyword id="KW-0216">Detoxification</keyword>
<keyword id="KW-0274">FAD</keyword>
<keyword id="KW-0285">Flavoprotein</keyword>
<keyword id="KW-0349">Heme</keyword>
<keyword id="KW-0408">Iron</keyword>
<keyword id="KW-0479">Metal-binding</keyword>
<keyword id="KW-0520">NAD</keyword>
<keyword id="KW-0521">NADP</keyword>
<keyword id="KW-0560">Oxidoreductase</keyword>
<keyword id="KW-0561">Oxygen transport</keyword>
<keyword id="KW-0813">Transport</keyword>
<accession>Q6HLA6</accession>
<comment type="function">
    <text evidence="1">Is involved in NO detoxification in an aerobic process, termed nitric oxide dioxygenase (NOD) reaction that utilizes O(2) and NAD(P)H to convert NO to nitrate, which protects the bacterium from various noxious nitrogen compounds. Therefore, plays a central role in the inducible response to nitrosative stress.</text>
</comment>
<comment type="catalytic activity">
    <reaction evidence="1">
        <text>2 nitric oxide + NADPH + 2 O2 = 2 nitrate + NADP(+) + H(+)</text>
        <dbReference type="Rhea" id="RHEA:19465"/>
        <dbReference type="ChEBI" id="CHEBI:15378"/>
        <dbReference type="ChEBI" id="CHEBI:15379"/>
        <dbReference type="ChEBI" id="CHEBI:16480"/>
        <dbReference type="ChEBI" id="CHEBI:17632"/>
        <dbReference type="ChEBI" id="CHEBI:57783"/>
        <dbReference type="ChEBI" id="CHEBI:58349"/>
        <dbReference type="EC" id="1.14.12.17"/>
    </reaction>
</comment>
<comment type="catalytic activity">
    <reaction evidence="1">
        <text>2 nitric oxide + NADH + 2 O2 = 2 nitrate + NAD(+) + H(+)</text>
        <dbReference type="Rhea" id="RHEA:19469"/>
        <dbReference type="ChEBI" id="CHEBI:15378"/>
        <dbReference type="ChEBI" id="CHEBI:15379"/>
        <dbReference type="ChEBI" id="CHEBI:16480"/>
        <dbReference type="ChEBI" id="CHEBI:17632"/>
        <dbReference type="ChEBI" id="CHEBI:57540"/>
        <dbReference type="ChEBI" id="CHEBI:57945"/>
        <dbReference type="EC" id="1.14.12.17"/>
    </reaction>
</comment>
<comment type="cofactor">
    <cofactor evidence="1">
        <name>heme b</name>
        <dbReference type="ChEBI" id="CHEBI:60344"/>
    </cofactor>
    <text evidence="1">Binds 1 heme b (iron(II)-protoporphyrin IX) group per subunit.</text>
</comment>
<comment type="cofactor">
    <cofactor evidence="1">
        <name>FAD</name>
        <dbReference type="ChEBI" id="CHEBI:57692"/>
    </cofactor>
    <text evidence="1">Binds 1 FAD per subunit.</text>
</comment>
<comment type="domain">
    <text>Consists of two distinct domains; an N-terminal heme-containing oxygen-binding domain and a C-terminal reductase domain with binding sites for FAD and NAD(P)H.</text>
</comment>
<comment type="similarity">
    <text evidence="1">Belongs to the globin family. Two-domain flavohemoproteins subfamily.</text>
</comment>
<comment type="similarity">
    <text evidence="1">In the C-terminal section; belongs to the flavoprotein pyridine nucleotide cytochrome reductase family.</text>
</comment>
<feature type="chain" id="PRO_0000052423" description="Flavohemoprotein">
    <location>
        <begin position="1"/>
        <end position="402"/>
    </location>
</feature>
<feature type="domain" description="Globin" evidence="2">
    <location>
        <begin position="1"/>
        <end position="136"/>
    </location>
</feature>
<feature type="domain" description="FAD-binding FR-type" evidence="1">
    <location>
        <begin position="150"/>
        <end position="260"/>
    </location>
</feature>
<feature type="region of interest" description="Reductase">
    <location>
        <begin position="147"/>
        <end position="402"/>
    </location>
</feature>
<feature type="active site" description="Charge relay system" evidence="1">
    <location>
        <position position="95"/>
    </location>
</feature>
<feature type="active site" description="Charge relay system" evidence="1">
    <location>
        <position position="135"/>
    </location>
</feature>
<feature type="binding site" description="proximal binding residue" evidence="1">
    <location>
        <position position="85"/>
    </location>
    <ligand>
        <name>heme b</name>
        <dbReference type="ChEBI" id="CHEBI:60344"/>
    </ligand>
    <ligandPart>
        <name>Fe</name>
        <dbReference type="ChEBI" id="CHEBI:18248"/>
    </ligandPart>
</feature>
<feature type="binding site" evidence="1">
    <location>
        <position position="188"/>
    </location>
    <ligand>
        <name>FAD</name>
        <dbReference type="ChEBI" id="CHEBI:57692"/>
    </ligand>
</feature>
<feature type="binding site" evidence="1">
    <location>
        <begin position="204"/>
        <end position="207"/>
    </location>
    <ligand>
        <name>FAD</name>
        <dbReference type="ChEBI" id="CHEBI:57692"/>
    </ligand>
</feature>
<feature type="binding site" evidence="1">
    <location>
        <begin position="273"/>
        <end position="278"/>
    </location>
    <ligand>
        <name>NADP(+)</name>
        <dbReference type="ChEBI" id="CHEBI:58349"/>
    </ligand>
</feature>
<feature type="binding site" evidence="1">
    <location>
        <begin position="394"/>
        <end position="397"/>
    </location>
    <ligand>
        <name>FAD</name>
        <dbReference type="ChEBI" id="CHEBI:57692"/>
    </ligand>
</feature>
<feature type="site" description="Involved in heme-bound ligand stabilization and O-O bond activation" evidence="1">
    <location>
        <position position="29"/>
    </location>
</feature>
<feature type="site" description="Influences the redox potential of the prosthetic heme and FAD groups" evidence="1">
    <location>
        <position position="84"/>
    </location>
</feature>
<feature type="site" description="Influences the redox potential of the prosthetic heme and FAD groups" evidence="1">
    <location>
        <position position="393"/>
    </location>
</feature>
<protein>
    <recommendedName>
        <fullName evidence="1">Flavohemoprotein</fullName>
    </recommendedName>
    <alternativeName>
        <fullName evidence="1">Flavohemoglobin</fullName>
    </alternativeName>
    <alternativeName>
        <fullName evidence="1">Hemoglobin-like protein</fullName>
    </alternativeName>
    <alternativeName>
        <fullName evidence="1">Nitric oxide dioxygenase</fullName>
        <shortName evidence="1">NO oxygenase</shortName>
        <shortName evidence="1">NOD</shortName>
        <ecNumber evidence="1">1.14.12.17</ecNumber>
    </alternativeName>
</protein>
<name>HMP_BACHK</name>
<organism>
    <name type="scientific">Bacillus thuringiensis subsp. konkukian (strain 97-27)</name>
    <dbReference type="NCBI Taxonomy" id="281309"/>
    <lineage>
        <taxon>Bacteria</taxon>
        <taxon>Bacillati</taxon>
        <taxon>Bacillota</taxon>
        <taxon>Bacilli</taxon>
        <taxon>Bacillales</taxon>
        <taxon>Bacillaceae</taxon>
        <taxon>Bacillus</taxon>
        <taxon>Bacillus cereus group</taxon>
    </lineage>
</organism>
<reference key="1">
    <citation type="journal article" date="2006" name="J. Bacteriol.">
        <title>Pathogenomic sequence analysis of Bacillus cereus and Bacillus thuringiensis isolates closely related to Bacillus anthracis.</title>
        <authorList>
            <person name="Han C.S."/>
            <person name="Xie G."/>
            <person name="Challacombe J.F."/>
            <person name="Altherr M.R."/>
            <person name="Bhotika S.S."/>
            <person name="Bruce D."/>
            <person name="Campbell C.S."/>
            <person name="Campbell M.L."/>
            <person name="Chen J."/>
            <person name="Chertkov O."/>
            <person name="Cleland C."/>
            <person name="Dimitrijevic M."/>
            <person name="Doggett N.A."/>
            <person name="Fawcett J.J."/>
            <person name="Glavina T."/>
            <person name="Goodwin L.A."/>
            <person name="Hill K.K."/>
            <person name="Hitchcock P."/>
            <person name="Jackson P.J."/>
            <person name="Keim P."/>
            <person name="Kewalramani A.R."/>
            <person name="Longmire J."/>
            <person name="Lucas S."/>
            <person name="Malfatti S."/>
            <person name="McMurry K."/>
            <person name="Meincke L.J."/>
            <person name="Misra M."/>
            <person name="Moseman B.L."/>
            <person name="Mundt M."/>
            <person name="Munk A.C."/>
            <person name="Okinaka R.T."/>
            <person name="Parson-Quintana B."/>
            <person name="Reilly L.P."/>
            <person name="Richardson P."/>
            <person name="Robinson D.L."/>
            <person name="Rubin E."/>
            <person name="Saunders E."/>
            <person name="Tapia R."/>
            <person name="Tesmer J.G."/>
            <person name="Thayer N."/>
            <person name="Thompson L.S."/>
            <person name="Tice H."/>
            <person name="Ticknor L.O."/>
            <person name="Wills P.L."/>
            <person name="Brettin T.S."/>
            <person name="Gilna P."/>
        </authorList>
    </citation>
    <scope>NUCLEOTIDE SEQUENCE [LARGE SCALE GENOMIC DNA]</scope>
    <source>
        <strain>97-27</strain>
    </source>
</reference>
<gene>
    <name evidence="1" type="primary">hmp</name>
    <name type="ordered locus">BT9727_1331</name>
</gene>
<sequence>MLSEKTIEIVKSTVPLLQEKGVEITTRFYEILFSEHPELLNIFNHTNQKKGRQQQALANAVYAAATYIDNLEAIIPVVKQIGHKHRSLGIKAEHYPIVGTCLLRAIKEVAGAPDEVLNAWGEAYGVIADAFISIEAEMYEEAAHKEGGWKDFRNFVVVKKVKESDVITSFYLKPEDGGKVSSFIPGQYVTVQINIEGETYTHNRQYSLSDAPGKEYYRISVKKEKGVDTPDGKVSNYLHDHVKEGDMLPVSAPAGDFVLNMDSTLPVVLISGGVGITPMMSMLNTLIEQDSKRNVCFVHAAINSNTHAMKEHVEAVDNEYEQVKAYTCYSAPTEKDLEMKNFDKEGFVEREWLQTIIPTTEAEFYFCGPVPFMKHINAVLTDLGVKQEHIHYEFFGPAASLQ</sequence>
<proteinExistence type="inferred from homology"/>
<evidence type="ECO:0000255" key="1">
    <source>
        <dbReference type="HAMAP-Rule" id="MF_01252"/>
    </source>
</evidence>
<evidence type="ECO:0000255" key="2">
    <source>
        <dbReference type="PROSITE-ProRule" id="PRU00238"/>
    </source>
</evidence>